<name>NDHI_SPIUR</name>
<organism>
    <name type="scientific">Spilanthes urens</name>
    <name type="common">Pigeoncoop</name>
    <dbReference type="NCBI Taxonomy" id="183081"/>
    <lineage>
        <taxon>Eukaryota</taxon>
        <taxon>Viridiplantae</taxon>
        <taxon>Streptophyta</taxon>
        <taxon>Embryophyta</taxon>
        <taxon>Tracheophyta</taxon>
        <taxon>Spermatophyta</taxon>
        <taxon>Magnoliopsida</taxon>
        <taxon>eudicotyledons</taxon>
        <taxon>Gunneridae</taxon>
        <taxon>Pentapetalae</taxon>
        <taxon>asterids</taxon>
        <taxon>campanulids</taxon>
        <taxon>Asterales</taxon>
        <taxon>Asteraceae</taxon>
        <taxon>Asteroideae</taxon>
        <taxon>Heliantheae alliance</taxon>
        <taxon>Heliantheae</taxon>
        <taxon>Spilanthes</taxon>
    </lineage>
</organism>
<geneLocation type="chloroplast"/>
<reference key="1">
    <citation type="submission" date="2003-01" db="EMBL/GenBank/DDBJ databases">
        <title>Chloroplast DNA phylogeny of tribe Heliantheae (Asteraceae).</title>
        <authorList>
            <person name="Panero J.L."/>
            <person name="Baldwin B.G."/>
            <person name="Schilling E.E."/>
            <person name="Clevinger J.A."/>
        </authorList>
    </citation>
    <scope>NUCLEOTIDE SEQUENCE [GENOMIC DNA]</scope>
</reference>
<sequence length="166" mass="19475">MFPMVTEFMNYGQQTVRAARYIGQGFMITLSHANRLPVTIQYPYEKLITSERFRGRIHFEFDKCIACEVCVRVCPIDLPVVDWKLETDIRKKRLLNYSIDFGICIFCGNCVEYCPTNCLSMTEEYELSTYDRHELNYNQIALGRLPMSIIDDYTIRTILNLPEIKT</sequence>
<keyword id="KW-0004">4Fe-4S</keyword>
<keyword id="KW-0150">Chloroplast</keyword>
<keyword id="KW-0408">Iron</keyword>
<keyword id="KW-0411">Iron-sulfur</keyword>
<keyword id="KW-0472">Membrane</keyword>
<keyword id="KW-0479">Metal-binding</keyword>
<keyword id="KW-0520">NAD</keyword>
<keyword id="KW-0521">NADP</keyword>
<keyword id="KW-0934">Plastid</keyword>
<keyword id="KW-0618">Plastoquinone</keyword>
<keyword id="KW-0874">Quinone</keyword>
<keyword id="KW-0677">Repeat</keyword>
<keyword id="KW-0793">Thylakoid</keyword>
<keyword id="KW-1278">Translocase</keyword>
<evidence type="ECO:0000255" key="1">
    <source>
        <dbReference type="HAMAP-Rule" id="MF_01351"/>
    </source>
</evidence>
<proteinExistence type="inferred from homology"/>
<comment type="function">
    <text evidence="1">NDH shuttles electrons from NAD(P)H:plastoquinone, via FMN and iron-sulfur (Fe-S) centers, to quinones in the photosynthetic chain and possibly in a chloroplast respiratory chain. The immediate electron acceptor for the enzyme in this species is believed to be plastoquinone. Couples the redox reaction to proton translocation, and thus conserves the redox energy in a proton gradient.</text>
</comment>
<comment type="catalytic activity">
    <reaction evidence="1">
        <text>a plastoquinone + NADH + (n+1) H(+)(in) = a plastoquinol + NAD(+) + n H(+)(out)</text>
        <dbReference type="Rhea" id="RHEA:42608"/>
        <dbReference type="Rhea" id="RHEA-COMP:9561"/>
        <dbReference type="Rhea" id="RHEA-COMP:9562"/>
        <dbReference type="ChEBI" id="CHEBI:15378"/>
        <dbReference type="ChEBI" id="CHEBI:17757"/>
        <dbReference type="ChEBI" id="CHEBI:57540"/>
        <dbReference type="ChEBI" id="CHEBI:57945"/>
        <dbReference type="ChEBI" id="CHEBI:62192"/>
    </reaction>
</comment>
<comment type="catalytic activity">
    <reaction evidence="1">
        <text>a plastoquinone + NADPH + (n+1) H(+)(in) = a plastoquinol + NADP(+) + n H(+)(out)</text>
        <dbReference type="Rhea" id="RHEA:42612"/>
        <dbReference type="Rhea" id="RHEA-COMP:9561"/>
        <dbReference type="Rhea" id="RHEA-COMP:9562"/>
        <dbReference type="ChEBI" id="CHEBI:15378"/>
        <dbReference type="ChEBI" id="CHEBI:17757"/>
        <dbReference type="ChEBI" id="CHEBI:57783"/>
        <dbReference type="ChEBI" id="CHEBI:58349"/>
        <dbReference type="ChEBI" id="CHEBI:62192"/>
    </reaction>
</comment>
<comment type="cofactor">
    <cofactor evidence="1">
        <name>[4Fe-4S] cluster</name>
        <dbReference type="ChEBI" id="CHEBI:49883"/>
    </cofactor>
    <text evidence="1">Binds 2 [4Fe-4S] clusters per subunit.</text>
</comment>
<comment type="subunit">
    <text evidence="1">NDH is composed of at least 16 different subunits, 5 of which are encoded in the nucleus.</text>
</comment>
<comment type="subcellular location">
    <subcellularLocation>
        <location evidence="1">Plastid</location>
        <location evidence="1">Chloroplast thylakoid membrane</location>
        <topology evidence="1">Peripheral membrane protein</topology>
    </subcellularLocation>
</comment>
<comment type="similarity">
    <text evidence="1">Belongs to the complex I 23 kDa subunit family.</text>
</comment>
<dbReference type="EC" id="7.1.1.-" evidence="1"/>
<dbReference type="EMBL" id="AF383853">
    <property type="protein sequence ID" value="AAN61794.1"/>
    <property type="molecule type" value="Genomic_DNA"/>
</dbReference>
<dbReference type="SMR" id="Q8HVL0"/>
<dbReference type="GO" id="GO:0009535">
    <property type="term" value="C:chloroplast thylakoid membrane"/>
    <property type="evidence" value="ECO:0007669"/>
    <property type="project" value="UniProtKB-SubCell"/>
</dbReference>
<dbReference type="GO" id="GO:0051539">
    <property type="term" value="F:4 iron, 4 sulfur cluster binding"/>
    <property type="evidence" value="ECO:0007669"/>
    <property type="project" value="UniProtKB-KW"/>
</dbReference>
<dbReference type="GO" id="GO:0005506">
    <property type="term" value="F:iron ion binding"/>
    <property type="evidence" value="ECO:0007669"/>
    <property type="project" value="UniProtKB-UniRule"/>
</dbReference>
<dbReference type="GO" id="GO:0008137">
    <property type="term" value="F:NADH dehydrogenase (ubiquinone) activity"/>
    <property type="evidence" value="ECO:0007669"/>
    <property type="project" value="InterPro"/>
</dbReference>
<dbReference type="GO" id="GO:0048038">
    <property type="term" value="F:quinone binding"/>
    <property type="evidence" value="ECO:0007669"/>
    <property type="project" value="UniProtKB-KW"/>
</dbReference>
<dbReference type="GO" id="GO:0019684">
    <property type="term" value="P:photosynthesis, light reaction"/>
    <property type="evidence" value="ECO:0007669"/>
    <property type="project" value="UniProtKB-UniRule"/>
</dbReference>
<dbReference type="FunFam" id="3.30.70.3270:FF:000006">
    <property type="entry name" value="NAD(P)H-quinone oxidoreductase subunit I, chloroplastic"/>
    <property type="match status" value="1"/>
</dbReference>
<dbReference type="Gene3D" id="3.30.70.3270">
    <property type="match status" value="1"/>
</dbReference>
<dbReference type="HAMAP" id="MF_01351">
    <property type="entry name" value="NDH1_NuoI"/>
    <property type="match status" value="1"/>
</dbReference>
<dbReference type="InterPro" id="IPR017896">
    <property type="entry name" value="4Fe4S_Fe-S-bd"/>
</dbReference>
<dbReference type="InterPro" id="IPR017900">
    <property type="entry name" value="4Fe4S_Fe_S_CS"/>
</dbReference>
<dbReference type="InterPro" id="IPR010226">
    <property type="entry name" value="NADH_quinone_OxRdtase_chainI"/>
</dbReference>
<dbReference type="InterPro" id="IPR004497">
    <property type="entry name" value="NDHI"/>
</dbReference>
<dbReference type="NCBIfam" id="TIGR00403">
    <property type="entry name" value="ndhI"/>
    <property type="match status" value="1"/>
</dbReference>
<dbReference type="NCBIfam" id="TIGR01971">
    <property type="entry name" value="NuoI"/>
    <property type="match status" value="1"/>
</dbReference>
<dbReference type="NCBIfam" id="NF004537">
    <property type="entry name" value="PRK05888.1-3"/>
    <property type="match status" value="1"/>
</dbReference>
<dbReference type="PANTHER" id="PTHR47275">
    <property type="entry name" value="NAD(P)H-QUINONE OXIDOREDUCTASE SUBUNIT I, CHLOROPLASTIC"/>
    <property type="match status" value="1"/>
</dbReference>
<dbReference type="PANTHER" id="PTHR47275:SF1">
    <property type="entry name" value="NAD(P)H-QUINONE OXIDOREDUCTASE SUBUNIT I, CHLOROPLASTIC"/>
    <property type="match status" value="1"/>
</dbReference>
<dbReference type="Pfam" id="PF00037">
    <property type="entry name" value="Fer4"/>
    <property type="match status" value="2"/>
</dbReference>
<dbReference type="SUPFAM" id="SSF54862">
    <property type="entry name" value="4Fe-4S ferredoxins"/>
    <property type="match status" value="1"/>
</dbReference>
<dbReference type="PROSITE" id="PS00198">
    <property type="entry name" value="4FE4S_FER_1"/>
    <property type="match status" value="2"/>
</dbReference>
<dbReference type="PROSITE" id="PS51379">
    <property type="entry name" value="4FE4S_FER_2"/>
    <property type="match status" value="2"/>
</dbReference>
<accession>Q8HVL0</accession>
<protein>
    <recommendedName>
        <fullName evidence="1">NAD(P)H-quinone oxidoreductase subunit I, chloroplastic</fullName>
        <ecNumber evidence="1">7.1.1.-</ecNumber>
    </recommendedName>
    <alternativeName>
        <fullName evidence="1">NAD(P)H dehydrogenase subunit I</fullName>
        <shortName evidence="1">NDH subunit I</shortName>
    </alternativeName>
    <alternativeName>
        <fullName evidence="1">NADH-plastoquinone oxidoreductase subunit I</fullName>
    </alternativeName>
</protein>
<feature type="chain" id="PRO_0000250852" description="NAD(P)H-quinone oxidoreductase subunit I, chloroplastic">
    <location>
        <begin position="1"/>
        <end position="166"/>
    </location>
</feature>
<feature type="domain" description="4Fe-4S ferredoxin-type 1" evidence="1">
    <location>
        <begin position="55"/>
        <end position="84"/>
    </location>
</feature>
<feature type="domain" description="4Fe-4S ferredoxin-type 2" evidence="1">
    <location>
        <begin position="95"/>
        <end position="124"/>
    </location>
</feature>
<feature type="binding site" evidence="1">
    <location>
        <position position="64"/>
    </location>
    <ligand>
        <name>[4Fe-4S] cluster</name>
        <dbReference type="ChEBI" id="CHEBI:49883"/>
        <label>1</label>
    </ligand>
</feature>
<feature type="binding site" evidence="1">
    <location>
        <position position="67"/>
    </location>
    <ligand>
        <name>[4Fe-4S] cluster</name>
        <dbReference type="ChEBI" id="CHEBI:49883"/>
        <label>1</label>
    </ligand>
</feature>
<feature type="binding site" evidence="1">
    <location>
        <position position="70"/>
    </location>
    <ligand>
        <name>[4Fe-4S] cluster</name>
        <dbReference type="ChEBI" id="CHEBI:49883"/>
        <label>1</label>
    </ligand>
</feature>
<feature type="binding site" evidence="1">
    <location>
        <position position="74"/>
    </location>
    <ligand>
        <name>[4Fe-4S] cluster</name>
        <dbReference type="ChEBI" id="CHEBI:49883"/>
        <label>2</label>
    </ligand>
</feature>
<feature type="binding site" evidence="1">
    <location>
        <position position="104"/>
    </location>
    <ligand>
        <name>[4Fe-4S] cluster</name>
        <dbReference type="ChEBI" id="CHEBI:49883"/>
        <label>2</label>
    </ligand>
</feature>
<feature type="binding site" evidence="1">
    <location>
        <position position="107"/>
    </location>
    <ligand>
        <name>[4Fe-4S] cluster</name>
        <dbReference type="ChEBI" id="CHEBI:49883"/>
        <label>2</label>
    </ligand>
</feature>
<feature type="binding site" evidence="1">
    <location>
        <position position="110"/>
    </location>
    <ligand>
        <name>[4Fe-4S] cluster</name>
        <dbReference type="ChEBI" id="CHEBI:49883"/>
        <label>2</label>
    </ligand>
</feature>
<feature type="binding site" evidence="1">
    <location>
        <position position="114"/>
    </location>
    <ligand>
        <name>[4Fe-4S] cluster</name>
        <dbReference type="ChEBI" id="CHEBI:49883"/>
        <label>1</label>
    </ligand>
</feature>
<gene>
    <name evidence="1" type="primary">ndhI</name>
</gene>